<dbReference type="EC" id="2.1.1.74" evidence="1"/>
<dbReference type="EMBL" id="CP000227">
    <property type="protein sequence ID" value="ACM14045.1"/>
    <property type="molecule type" value="Genomic_DNA"/>
</dbReference>
<dbReference type="SMR" id="B9IVC1"/>
<dbReference type="KEGG" id="bcq:BCQ_3617"/>
<dbReference type="HOGENOM" id="CLU_033057_1_0_9"/>
<dbReference type="Proteomes" id="UP000000441">
    <property type="component" value="Chromosome"/>
</dbReference>
<dbReference type="GO" id="GO:0005829">
    <property type="term" value="C:cytosol"/>
    <property type="evidence" value="ECO:0007669"/>
    <property type="project" value="TreeGrafter"/>
</dbReference>
<dbReference type="GO" id="GO:0050660">
    <property type="term" value="F:flavin adenine dinucleotide binding"/>
    <property type="evidence" value="ECO:0007669"/>
    <property type="project" value="UniProtKB-UniRule"/>
</dbReference>
<dbReference type="GO" id="GO:0047151">
    <property type="term" value="F:tRNA (uracil(54)-C5)-methyltransferase activity, 5,10-methylenetetrahydrofolate-dependent"/>
    <property type="evidence" value="ECO:0007669"/>
    <property type="project" value="UniProtKB-UniRule"/>
</dbReference>
<dbReference type="GO" id="GO:0030488">
    <property type="term" value="P:tRNA methylation"/>
    <property type="evidence" value="ECO:0007669"/>
    <property type="project" value="TreeGrafter"/>
</dbReference>
<dbReference type="GO" id="GO:0002098">
    <property type="term" value="P:tRNA wobble uridine modification"/>
    <property type="evidence" value="ECO:0007669"/>
    <property type="project" value="TreeGrafter"/>
</dbReference>
<dbReference type="FunFam" id="3.50.50.60:FF:000035">
    <property type="entry name" value="Methylenetetrahydrofolate--tRNA-(uracil-5-)-methyltransferase TrmFO"/>
    <property type="match status" value="1"/>
</dbReference>
<dbReference type="FunFam" id="3.50.50.60:FF:000040">
    <property type="entry name" value="Methylenetetrahydrofolate--tRNA-(uracil-5-)-methyltransferase TrmFO"/>
    <property type="match status" value="1"/>
</dbReference>
<dbReference type="Gene3D" id="3.50.50.60">
    <property type="entry name" value="FAD/NAD(P)-binding domain"/>
    <property type="match status" value="2"/>
</dbReference>
<dbReference type="HAMAP" id="MF_01037">
    <property type="entry name" value="TrmFO"/>
    <property type="match status" value="1"/>
</dbReference>
<dbReference type="InterPro" id="IPR036188">
    <property type="entry name" value="FAD/NAD-bd_sf"/>
</dbReference>
<dbReference type="InterPro" id="IPR002218">
    <property type="entry name" value="MnmG-rel"/>
</dbReference>
<dbReference type="InterPro" id="IPR020595">
    <property type="entry name" value="MnmG-rel_CS"/>
</dbReference>
<dbReference type="InterPro" id="IPR040131">
    <property type="entry name" value="MnmG_N"/>
</dbReference>
<dbReference type="InterPro" id="IPR004417">
    <property type="entry name" value="TrmFO"/>
</dbReference>
<dbReference type="NCBIfam" id="TIGR00137">
    <property type="entry name" value="gid_trmFO"/>
    <property type="match status" value="1"/>
</dbReference>
<dbReference type="NCBIfam" id="NF003739">
    <property type="entry name" value="PRK05335.1"/>
    <property type="match status" value="1"/>
</dbReference>
<dbReference type="PANTHER" id="PTHR11806">
    <property type="entry name" value="GLUCOSE INHIBITED DIVISION PROTEIN A"/>
    <property type="match status" value="1"/>
</dbReference>
<dbReference type="PANTHER" id="PTHR11806:SF2">
    <property type="entry name" value="METHYLENETETRAHYDROFOLATE--TRNA-(URACIL-5-)-METHYLTRANSFERASE TRMFO"/>
    <property type="match status" value="1"/>
</dbReference>
<dbReference type="Pfam" id="PF01134">
    <property type="entry name" value="GIDA"/>
    <property type="match status" value="1"/>
</dbReference>
<dbReference type="SUPFAM" id="SSF51905">
    <property type="entry name" value="FAD/NAD(P)-binding domain"/>
    <property type="match status" value="1"/>
</dbReference>
<dbReference type="PROSITE" id="PS01281">
    <property type="entry name" value="GIDA_2"/>
    <property type="match status" value="1"/>
</dbReference>
<evidence type="ECO:0000255" key="1">
    <source>
        <dbReference type="HAMAP-Rule" id="MF_01037"/>
    </source>
</evidence>
<organism>
    <name type="scientific">Bacillus cereus (strain Q1)</name>
    <dbReference type="NCBI Taxonomy" id="361100"/>
    <lineage>
        <taxon>Bacteria</taxon>
        <taxon>Bacillati</taxon>
        <taxon>Bacillota</taxon>
        <taxon>Bacilli</taxon>
        <taxon>Bacillales</taxon>
        <taxon>Bacillaceae</taxon>
        <taxon>Bacillus</taxon>
        <taxon>Bacillus cereus group</taxon>
    </lineage>
</organism>
<accession>B9IVC1</accession>
<comment type="function">
    <text evidence="1">Catalyzes the folate-dependent formation of 5-methyl-uridine at position 54 (M-5-U54) in all tRNAs.</text>
</comment>
<comment type="catalytic activity">
    <reaction evidence="1">
        <text>uridine(54) in tRNA + (6R)-5,10-methylene-5,6,7,8-tetrahydrofolate + NADH + H(+) = 5-methyluridine(54) in tRNA + (6S)-5,6,7,8-tetrahydrofolate + NAD(+)</text>
        <dbReference type="Rhea" id="RHEA:16873"/>
        <dbReference type="Rhea" id="RHEA-COMP:10167"/>
        <dbReference type="Rhea" id="RHEA-COMP:10193"/>
        <dbReference type="ChEBI" id="CHEBI:15378"/>
        <dbReference type="ChEBI" id="CHEBI:15636"/>
        <dbReference type="ChEBI" id="CHEBI:57453"/>
        <dbReference type="ChEBI" id="CHEBI:57540"/>
        <dbReference type="ChEBI" id="CHEBI:57945"/>
        <dbReference type="ChEBI" id="CHEBI:65315"/>
        <dbReference type="ChEBI" id="CHEBI:74447"/>
        <dbReference type="EC" id="2.1.1.74"/>
    </reaction>
</comment>
<comment type="catalytic activity">
    <reaction evidence="1">
        <text>uridine(54) in tRNA + (6R)-5,10-methylene-5,6,7,8-tetrahydrofolate + NADPH + H(+) = 5-methyluridine(54) in tRNA + (6S)-5,6,7,8-tetrahydrofolate + NADP(+)</text>
        <dbReference type="Rhea" id="RHEA:62372"/>
        <dbReference type="Rhea" id="RHEA-COMP:10167"/>
        <dbReference type="Rhea" id="RHEA-COMP:10193"/>
        <dbReference type="ChEBI" id="CHEBI:15378"/>
        <dbReference type="ChEBI" id="CHEBI:15636"/>
        <dbReference type="ChEBI" id="CHEBI:57453"/>
        <dbReference type="ChEBI" id="CHEBI:57783"/>
        <dbReference type="ChEBI" id="CHEBI:58349"/>
        <dbReference type="ChEBI" id="CHEBI:65315"/>
        <dbReference type="ChEBI" id="CHEBI:74447"/>
        <dbReference type="EC" id="2.1.1.74"/>
    </reaction>
</comment>
<comment type="cofactor">
    <cofactor evidence="1">
        <name>FAD</name>
        <dbReference type="ChEBI" id="CHEBI:57692"/>
    </cofactor>
</comment>
<comment type="subcellular location">
    <subcellularLocation>
        <location evidence="1">Cytoplasm</location>
    </subcellularLocation>
</comment>
<comment type="similarity">
    <text evidence="1">Belongs to the MnmG family. TrmFO subfamily.</text>
</comment>
<protein>
    <recommendedName>
        <fullName evidence="1">Methylenetetrahydrofolate--tRNA-(uracil-5-)-methyltransferase TrmFO</fullName>
        <ecNumber evidence="1">2.1.1.74</ecNumber>
    </recommendedName>
    <alternativeName>
        <fullName evidence="1">Folate-dependent tRNA (uracil-5-)-methyltransferase</fullName>
    </alternativeName>
    <alternativeName>
        <fullName evidence="1">Folate-dependent tRNA(M-5-U54)-methyltransferase</fullName>
    </alternativeName>
</protein>
<feature type="chain" id="PRO_1000149467" description="Methylenetetrahydrofolate--tRNA-(uracil-5-)-methyltransferase TrmFO">
    <location>
        <begin position="1"/>
        <end position="434"/>
    </location>
</feature>
<feature type="binding site" evidence="1">
    <location>
        <begin position="10"/>
        <end position="15"/>
    </location>
    <ligand>
        <name>FAD</name>
        <dbReference type="ChEBI" id="CHEBI:57692"/>
    </ligand>
</feature>
<proteinExistence type="inferred from homology"/>
<name>TRMFO_BACCQ</name>
<reference key="1">
    <citation type="journal article" date="2009" name="J. Bacteriol.">
        <title>Complete genome sequence of the extremophilic Bacillus cereus strain Q1 with industrial applications.</title>
        <authorList>
            <person name="Xiong Z."/>
            <person name="Jiang Y."/>
            <person name="Qi D."/>
            <person name="Lu H."/>
            <person name="Yang F."/>
            <person name="Yang J."/>
            <person name="Chen L."/>
            <person name="Sun L."/>
            <person name="Xu X."/>
            <person name="Xue Y."/>
            <person name="Zhu Y."/>
            <person name="Jin Q."/>
        </authorList>
    </citation>
    <scope>NUCLEOTIDE SEQUENCE [LARGE SCALE GENOMIC DNA]</scope>
    <source>
        <strain>Q1</strain>
    </source>
</reference>
<sequence length="434" mass="47991">MTTQVVNVIGAGLAGSEAAYQIAKRGVQVRLYEMRPVRQTPAHHTDKFAELVCSNSLRANTLTNAVGVIKEEMRLMDSVIIRAADECSVPAGGALAVDRHEFAAKVTEYVKNHPNVTVVNEEITKIPEGPTVIATGPLTSPDLSAQLKELTGEDYFYFYDAAAPIVEKDSIDMNKVYLKSRYDKGEAAYLNCPMTEEEFDRFYEALIAAETVPLKEFEKEIFFEGCMPVEVMASRGRQTLVFGPMKPVGLEDPKTGKTPYAVVQLRQDDAAGTLYNIVGFQTHLKWGPQKEVLQLIPGLENAEIVRYGVMHRNTFINSPNLLRPTYQYKQRDDLFFAGQMTGVEGYVESAASGLLAGINAARLVKGEEPVVLPPVTAMGSMANYITATNAKNFQPMNANFGLFAPLEKKIKKKAERNEAYATRALETIRNFVNI</sequence>
<gene>
    <name evidence="1" type="primary">trmFO</name>
    <name type="ordered locus">BCQ_3617</name>
</gene>
<keyword id="KW-0963">Cytoplasm</keyword>
<keyword id="KW-0274">FAD</keyword>
<keyword id="KW-0285">Flavoprotein</keyword>
<keyword id="KW-0489">Methyltransferase</keyword>
<keyword id="KW-0520">NAD</keyword>
<keyword id="KW-0521">NADP</keyword>
<keyword id="KW-0808">Transferase</keyword>
<keyword id="KW-0819">tRNA processing</keyword>